<organism>
    <name type="scientific">Mus musculus</name>
    <name type="common">Mouse</name>
    <dbReference type="NCBI Taxonomy" id="10090"/>
    <lineage>
        <taxon>Eukaryota</taxon>
        <taxon>Metazoa</taxon>
        <taxon>Chordata</taxon>
        <taxon>Craniata</taxon>
        <taxon>Vertebrata</taxon>
        <taxon>Euteleostomi</taxon>
        <taxon>Mammalia</taxon>
        <taxon>Eutheria</taxon>
        <taxon>Euarchontoglires</taxon>
        <taxon>Glires</taxon>
        <taxon>Rodentia</taxon>
        <taxon>Myomorpha</taxon>
        <taxon>Muroidea</taxon>
        <taxon>Muridae</taxon>
        <taxon>Murinae</taxon>
        <taxon>Mus</taxon>
        <taxon>Mus</taxon>
    </lineage>
</organism>
<proteinExistence type="evidence at transcript level"/>
<keyword id="KW-0025">Alternative splicing</keyword>
<keyword id="KW-1003">Cell membrane</keyword>
<keyword id="KW-1015">Disulfide bond</keyword>
<keyword id="KW-0325">Glycoprotein</keyword>
<keyword id="KW-0378">Hydrolase</keyword>
<keyword id="KW-0472">Membrane</keyword>
<keyword id="KW-0645">Protease</keyword>
<keyword id="KW-1185">Reference proteome</keyword>
<keyword id="KW-0720">Serine protease</keyword>
<keyword id="KW-0735">Signal-anchor</keyword>
<keyword id="KW-0812">Transmembrane</keyword>
<keyword id="KW-1133">Transmembrane helix</keyword>
<reference key="1">
    <citation type="submission" date="1998-07" db="EMBL/GenBank/DDBJ databases">
        <title>cDNA cloning of mouse spinesin.</title>
        <authorList>
            <person name="Mitsui S."/>
            <person name="Yamaguchi N."/>
        </authorList>
    </citation>
    <scope>NUCLEOTIDE SEQUENCE [MRNA] (ISOFORMS 1; 2 AND 3)</scope>
    <source>
        <tissue>Brain</tissue>
    </source>
</reference>
<reference key="2">
    <citation type="submission" date="2000-03" db="EMBL/GenBank/DDBJ databases">
        <title>Molecular cloning of mouse type 4 spinesin.</title>
        <authorList>
            <person name="Mitsui S."/>
            <person name="Yamaguchi N."/>
        </authorList>
    </citation>
    <scope>NUCLEOTIDE SEQUENCE [MRNA] (ISOFORM 4)</scope>
    <source>
        <tissue>Brain</tissue>
    </source>
</reference>
<reference key="3">
    <citation type="journal article" date="2009" name="PLoS Biol.">
        <title>Lineage-specific biology revealed by a finished genome assembly of the mouse.</title>
        <authorList>
            <person name="Church D.M."/>
            <person name="Goodstadt L."/>
            <person name="Hillier L.W."/>
            <person name="Zody M.C."/>
            <person name="Goldstein S."/>
            <person name="She X."/>
            <person name="Bult C.J."/>
            <person name="Agarwala R."/>
            <person name="Cherry J.L."/>
            <person name="DiCuccio M."/>
            <person name="Hlavina W."/>
            <person name="Kapustin Y."/>
            <person name="Meric P."/>
            <person name="Maglott D."/>
            <person name="Birtle Z."/>
            <person name="Marques A.C."/>
            <person name="Graves T."/>
            <person name="Zhou S."/>
            <person name="Teague B."/>
            <person name="Potamousis K."/>
            <person name="Churas C."/>
            <person name="Place M."/>
            <person name="Herschleb J."/>
            <person name="Runnheim R."/>
            <person name="Forrest D."/>
            <person name="Amos-Landgraf J."/>
            <person name="Schwartz D.C."/>
            <person name="Cheng Z."/>
            <person name="Lindblad-Toh K."/>
            <person name="Eichler E.E."/>
            <person name="Ponting C.P."/>
        </authorList>
    </citation>
    <scope>NUCLEOTIDE SEQUENCE [LARGE SCALE GENOMIC DNA]</scope>
    <source>
        <strain>C57BL/6J</strain>
    </source>
</reference>
<dbReference type="EC" id="3.4.21.-"/>
<dbReference type="EMBL" id="AB016229">
    <property type="protein sequence ID" value="BAB20276.1"/>
    <property type="molecule type" value="mRNA"/>
</dbReference>
<dbReference type="EMBL" id="AB016230">
    <property type="protein sequence ID" value="BAB20277.1"/>
    <property type="molecule type" value="mRNA"/>
</dbReference>
<dbReference type="EMBL" id="AB016423">
    <property type="protein sequence ID" value="BAB20278.1"/>
    <property type="molecule type" value="mRNA"/>
</dbReference>
<dbReference type="EMBL" id="AB041037">
    <property type="protein sequence ID" value="BAB40328.1"/>
    <property type="molecule type" value="mRNA"/>
</dbReference>
<dbReference type="EMBL" id="AC159825">
    <property type="status" value="NOT_ANNOTATED_CDS"/>
    <property type="molecule type" value="Genomic_DNA"/>
</dbReference>
<dbReference type="EMBL" id="AC160137">
    <property type="status" value="NOT_ANNOTATED_CDS"/>
    <property type="molecule type" value="Genomic_DNA"/>
</dbReference>
<dbReference type="CCDS" id="CCDS52789.1">
    <molecule id="Q9ER04-4"/>
</dbReference>
<dbReference type="CCDS" id="CCDS90560.1">
    <molecule id="Q9ER04-1"/>
</dbReference>
<dbReference type="RefSeq" id="NP_001346389.1">
    <molecule id="Q9ER04-1"/>
    <property type="nucleotide sequence ID" value="NM_001359460.2"/>
</dbReference>
<dbReference type="RefSeq" id="NP_109634.2">
    <molecule id="Q9ER04-4"/>
    <property type="nucleotide sequence ID" value="NM_030709.3"/>
</dbReference>
<dbReference type="RefSeq" id="XP_006510770.1">
    <property type="nucleotide sequence ID" value="XM_006510707.3"/>
</dbReference>
<dbReference type="RefSeq" id="XP_036011307.1">
    <molecule id="Q9ER04-3"/>
    <property type="nucleotide sequence ID" value="XM_036155414.1"/>
</dbReference>
<dbReference type="SMR" id="Q9ER04"/>
<dbReference type="BioGRID" id="219836">
    <property type="interactions" value="1"/>
</dbReference>
<dbReference type="FunCoup" id="Q9ER04">
    <property type="interactions" value="29"/>
</dbReference>
<dbReference type="STRING" id="10090.ENSMUSP00000064527"/>
<dbReference type="MEROPS" id="S01.313"/>
<dbReference type="GlyCosmos" id="Q9ER04">
    <property type="glycosylation" value="4 sites, No reported glycans"/>
</dbReference>
<dbReference type="GlyGen" id="Q9ER04">
    <property type="glycosylation" value="4 sites, 2 N-linked glycans (2 sites)"/>
</dbReference>
<dbReference type="PhosphoSitePlus" id="Q9ER04"/>
<dbReference type="PaxDb" id="10090-ENSMUSP00000064527"/>
<dbReference type="ProteomicsDB" id="259046">
    <molecule id="Q9ER04-1"/>
</dbReference>
<dbReference type="ProteomicsDB" id="259047">
    <molecule id="Q9ER04-2"/>
</dbReference>
<dbReference type="ProteomicsDB" id="259048">
    <molecule id="Q9ER04-3"/>
</dbReference>
<dbReference type="ProteomicsDB" id="259049">
    <molecule id="Q9ER04-4"/>
</dbReference>
<dbReference type="Antibodypedia" id="2582">
    <property type="antibodies" value="330 antibodies from 30 providers"/>
</dbReference>
<dbReference type="DNASU" id="80893"/>
<dbReference type="Ensembl" id="ENSMUST00000070390.12">
    <molecule id="Q9ER04-4"/>
    <property type="protein sequence ID" value="ENSMUSP00000064527.6"/>
    <property type="gene ID" value="ENSMUSG00000032268.14"/>
</dbReference>
<dbReference type="Ensembl" id="ENSMUST00000165088.8">
    <molecule id="Q9ER04-1"/>
    <property type="protein sequence ID" value="ENSMUSP00000132181.2"/>
    <property type="gene ID" value="ENSMUSG00000032268.14"/>
</dbReference>
<dbReference type="GeneID" id="80893"/>
<dbReference type="KEGG" id="mmu:80893"/>
<dbReference type="UCSC" id="uc009piw.3">
    <molecule id="Q9ER04-1"/>
    <property type="organism name" value="mouse"/>
</dbReference>
<dbReference type="AGR" id="MGI:1933407"/>
<dbReference type="CTD" id="80975"/>
<dbReference type="MGI" id="MGI:1933407">
    <property type="gene designation" value="Tmprss5"/>
</dbReference>
<dbReference type="VEuPathDB" id="HostDB:ENSMUSG00000032268"/>
<dbReference type="eggNOG" id="KOG3627">
    <property type="taxonomic scope" value="Eukaryota"/>
</dbReference>
<dbReference type="GeneTree" id="ENSGT00940000159163"/>
<dbReference type="InParanoid" id="Q9ER04"/>
<dbReference type="OMA" id="CSERWNS"/>
<dbReference type="OrthoDB" id="5979691at2759"/>
<dbReference type="PhylomeDB" id="Q9ER04"/>
<dbReference type="TreeFam" id="TF351678"/>
<dbReference type="BioGRID-ORCS" id="80893">
    <property type="hits" value="3 hits in 80 CRISPR screens"/>
</dbReference>
<dbReference type="ChiTaRS" id="Tmprss5">
    <property type="organism name" value="mouse"/>
</dbReference>
<dbReference type="PRO" id="PR:Q9ER04"/>
<dbReference type="Proteomes" id="UP000000589">
    <property type="component" value="Chromosome 9"/>
</dbReference>
<dbReference type="RNAct" id="Q9ER04">
    <property type="molecule type" value="protein"/>
</dbReference>
<dbReference type="Bgee" id="ENSMUSG00000032268">
    <property type="expression patterns" value="Expressed in lens of camera-type eye and 52 other cell types or tissues"/>
</dbReference>
<dbReference type="ExpressionAtlas" id="Q9ER04">
    <property type="expression patterns" value="baseline and differential"/>
</dbReference>
<dbReference type="GO" id="GO:0043025">
    <property type="term" value="C:neuronal cell body"/>
    <property type="evidence" value="ECO:0000314"/>
    <property type="project" value="UniProtKB"/>
</dbReference>
<dbReference type="GO" id="GO:0005886">
    <property type="term" value="C:plasma membrane"/>
    <property type="evidence" value="ECO:0007669"/>
    <property type="project" value="UniProtKB-SubCell"/>
</dbReference>
<dbReference type="GO" id="GO:0004252">
    <property type="term" value="F:serine-type endopeptidase activity"/>
    <property type="evidence" value="ECO:0007669"/>
    <property type="project" value="InterPro"/>
</dbReference>
<dbReference type="GO" id="GO:0006508">
    <property type="term" value="P:proteolysis"/>
    <property type="evidence" value="ECO:0007669"/>
    <property type="project" value="UniProtKB-KW"/>
</dbReference>
<dbReference type="CDD" id="cd00190">
    <property type="entry name" value="Tryp_SPc"/>
    <property type="match status" value="1"/>
</dbReference>
<dbReference type="FunFam" id="2.40.10.10:FF:000092">
    <property type="entry name" value="Transmembrane protease serine 5"/>
    <property type="match status" value="1"/>
</dbReference>
<dbReference type="Gene3D" id="3.10.250.10">
    <property type="entry name" value="SRCR-like domain"/>
    <property type="match status" value="1"/>
</dbReference>
<dbReference type="Gene3D" id="2.40.10.10">
    <property type="entry name" value="Trypsin-like serine proteases"/>
    <property type="match status" value="1"/>
</dbReference>
<dbReference type="InterPro" id="IPR009003">
    <property type="entry name" value="Peptidase_S1_PA"/>
</dbReference>
<dbReference type="InterPro" id="IPR043504">
    <property type="entry name" value="Peptidase_S1_PA_chymotrypsin"/>
</dbReference>
<dbReference type="InterPro" id="IPR001314">
    <property type="entry name" value="Peptidase_S1A"/>
</dbReference>
<dbReference type="InterPro" id="IPR001190">
    <property type="entry name" value="SRCR"/>
</dbReference>
<dbReference type="InterPro" id="IPR036772">
    <property type="entry name" value="SRCR-like_dom_sf"/>
</dbReference>
<dbReference type="InterPro" id="IPR001254">
    <property type="entry name" value="Trypsin_dom"/>
</dbReference>
<dbReference type="InterPro" id="IPR018114">
    <property type="entry name" value="TRYPSIN_HIS"/>
</dbReference>
<dbReference type="InterPro" id="IPR033116">
    <property type="entry name" value="TRYPSIN_SER"/>
</dbReference>
<dbReference type="PANTHER" id="PTHR24252">
    <property type="entry name" value="ACROSIN-RELATED"/>
    <property type="match status" value="1"/>
</dbReference>
<dbReference type="PANTHER" id="PTHR24252:SF17">
    <property type="entry name" value="SUPPRESSOR OF TUMORIGENICITY 14 PROTEIN HOMOLOG-RELATED"/>
    <property type="match status" value="1"/>
</dbReference>
<dbReference type="Pfam" id="PF15494">
    <property type="entry name" value="SRCR_2"/>
    <property type="match status" value="1"/>
</dbReference>
<dbReference type="Pfam" id="PF00089">
    <property type="entry name" value="Trypsin"/>
    <property type="match status" value="1"/>
</dbReference>
<dbReference type="PRINTS" id="PR00722">
    <property type="entry name" value="CHYMOTRYPSIN"/>
</dbReference>
<dbReference type="SMART" id="SM00020">
    <property type="entry name" value="Tryp_SPc"/>
    <property type="match status" value="1"/>
</dbReference>
<dbReference type="SUPFAM" id="SSF56487">
    <property type="entry name" value="SRCR-like"/>
    <property type="match status" value="1"/>
</dbReference>
<dbReference type="SUPFAM" id="SSF50494">
    <property type="entry name" value="Trypsin-like serine proteases"/>
    <property type="match status" value="1"/>
</dbReference>
<dbReference type="PROSITE" id="PS00420">
    <property type="entry name" value="SRCR_1"/>
    <property type="match status" value="1"/>
</dbReference>
<dbReference type="PROSITE" id="PS50287">
    <property type="entry name" value="SRCR_2"/>
    <property type="match status" value="1"/>
</dbReference>
<dbReference type="PROSITE" id="PS50240">
    <property type="entry name" value="TRYPSIN_DOM"/>
    <property type="match status" value="1"/>
</dbReference>
<dbReference type="PROSITE" id="PS00134">
    <property type="entry name" value="TRYPSIN_HIS"/>
    <property type="match status" value="1"/>
</dbReference>
<dbReference type="PROSITE" id="PS00135">
    <property type="entry name" value="TRYPSIN_SER"/>
    <property type="match status" value="1"/>
</dbReference>
<sequence length="455" mass="49644">MSPTLDDQSPMEIRCTEEGAGPGIFRMELGDQRQSISQSQRWCCLQRGCVILGVLGLLAGAGIASWLLVLYLWPAASPSISGTLQEEEMTLNCPGVSREEELLPSLPKTVSFRINGEDLLLQVQVRARPDWLLVCHEGWSPALGMHICKSLGHIRLTQHKAVNLSDIKLNRSQEFAQLSARPGGLVEESWKPSANCPSGRIVSLKCSECGARPLASRIVGGQAVASGRWPWQASVMLGSRHTCGASVLAPHWVVTAAHCMYSFRLSRLSSWRVHAGLVSHGAVRQHQGTMVEKIIPHPLYSAQNHDYDVALLQLRTPINFSDTVGAVCLPAKEQHFPWGSQCWVSGWGHTDPSHTHSSDTLQDTMVPLLSTYLCNSSCMYSGALTHRMLCAGYLDGRADACQGDSGGPLVCPSGDTWHLVGVVSWGRGCAEPNRPGVYAKVAEFLDWIHDTVQVR</sequence>
<protein>
    <recommendedName>
        <fullName>Transmembrane protease serine 5</fullName>
        <ecNumber>3.4.21.-</ecNumber>
    </recommendedName>
    <alternativeName>
        <fullName>Spinesin</fullName>
    </alternativeName>
</protein>
<gene>
    <name type="primary">Tmprss5</name>
</gene>
<accession>Q9ER04</accession>
<accession>E9Q2A5</accession>
<accession>Q9ER02</accession>
<accession>Q9ER03</accession>
<comment type="function">
    <text evidence="1">May play a role in hearing.</text>
</comment>
<comment type="subcellular location">
    <subcellularLocation>
        <location evidence="1">Cell membrane</location>
        <topology evidence="1">Single-pass type II membrane protein</topology>
    </subcellularLocation>
</comment>
<comment type="alternative products">
    <event type="alternative splicing"/>
    <isoform>
        <id>Q9ER04-1</id>
        <name>4</name>
        <sequence type="displayed"/>
    </isoform>
    <isoform>
        <id>Q9ER04-2</id>
        <name>1</name>
        <sequence type="described" ref="VSP_005397 VSP_005398"/>
    </isoform>
    <isoform>
        <id>Q9ER04-3</id>
        <name>2</name>
        <sequence type="described" ref="VSP_005395"/>
    </isoform>
    <isoform>
        <id>Q9ER04-4</id>
        <name>3</name>
        <sequence type="described" ref="VSP_005396"/>
    </isoform>
</comment>
<comment type="similarity">
    <text evidence="4">Belongs to the peptidase S1 family.</text>
</comment>
<name>TMPS5_MOUSE</name>
<feature type="chain" id="PRO_0000088695" description="Transmembrane protease serine 5">
    <location>
        <begin position="1"/>
        <end position="455"/>
    </location>
</feature>
<feature type="topological domain" description="Cytoplasmic" evidence="2">
    <location>
        <begin position="1"/>
        <end position="49"/>
    </location>
</feature>
<feature type="transmembrane region" description="Helical; Signal-anchor for type II membrane protein" evidence="2">
    <location>
        <begin position="50"/>
        <end position="70"/>
    </location>
</feature>
<feature type="topological domain" description="Extracellular" evidence="2">
    <location>
        <begin position="71"/>
        <end position="455"/>
    </location>
</feature>
<feature type="domain" description="SRCR" evidence="3">
    <location>
        <begin position="112"/>
        <end position="207"/>
    </location>
</feature>
<feature type="domain" description="Peptidase S1" evidence="4">
    <location>
        <begin position="218"/>
        <end position="453"/>
    </location>
</feature>
<feature type="active site" description="Charge relay system" evidence="1">
    <location>
        <position position="258"/>
    </location>
</feature>
<feature type="active site" description="Charge relay system" evidence="1">
    <location>
        <position position="308"/>
    </location>
</feature>
<feature type="active site" description="Charge relay system" evidence="1">
    <location>
        <position position="405"/>
    </location>
</feature>
<feature type="site" description="Cleavage" evidence="2">
    <location>
        <begin position="217"/>
        <end position="218"/>
    </location>
</feature>
<feature type="glycosylation site" description="N-linked (GlcNAc...) asparagine" evidence="2">
    <location>
        <position position="163"/>
    </location>
</feature>
<feature type="glycosylation site" description="N-linked (GlcNAc...) asparagine" evidence="2">
    <location>
        <position position="170"/>
    </location>
</feature>
<feature type="glycosylation site" description="N-linked (GlcNAc...) asparagine" evidence="2">
    <location>
        <position position="319"/>
    </location>
</feature>
<feature type="glycosylation site" description="N-linked (GlcNAc...) asparagine" evidence="2">
    <location>
        <position position="375"/>
    </location>
</feature>
<feature type="disulfide bond" evidence="1">
    <location>
        <begin position="135"/>
        <end position="196"/>
    </location>
</feature>
<feature type="disulfide bond" evidence="1">
    <location>
        <begin position="148"/>
        <end position="206"/>
    </location>
</feature>
<feature type="disulfide bond" evidence="1">
    <location>
        <begin position="209"/>
        <end position="328"/>
    </location>
</feature>
<feature type="disulfide bond" evidence="1">
    <location>
        <begin position="243"/>
        <end position="259"/>
    </location>
</feature>
<feature type="disulfide bond" evidence="1">
    <location>
        <begin position="342"/>
        <end position="411"/>
    </location>
</feature>
<feature type="disulfide bond" evidence="1">
    <location>
        <begin position="374"/>
        <end position="390"/>
    </location>
</feature>
<feature type="disulfide bond" evidence="1">
    <location>
        <begin position="401"/>
        <end position="429"/>
    </location>
</feature>
<feature type="splice variant" id="VSP_005397" description="In isoform 1." evidence="5">
    <location>
        <begin position="1"/>
        <end position="182"/>
    </location>
</feature>
<feature type="splice variant" id="VSP_005395" description="In isoform 2." evidence="5">
    <location>
        <begin position="1"/>
        <end position="144"/>
    </location>
</feature>
<feature type="splice variant" id="VSP_005396" description="In isoform 3." evidence="5">
    <location>
        <begin position="1"/>
        <end position="10"/>
    </location>
</feature>
<feature type="splice variant" id="VSP_005398" description="In isoform 1." evidence="5">
    <original>GGLVEESWKP</original>
    <variation>MEAQVGLLWV</variation>
    <location>
        <begin position="183"/>
        <end position="192"/>
    </location>
</feature>
<feature type="sequence conflict" description="In Ref. 1; BAB20277 and 2; BAB40328." evidence="6" ref="1 2">
    <original>R</original>
    <variation>C</variation>
    <location>
        <position position="98"/>
    </location>
</feature>
<feature type="sequence conflict" description="In Ref. 1; BAB20276/BAB20277 and 2; BAB40328." evidence="6" ref="1 2">
    <original>S</original>
    <variation>A</variation>
    <location>
        <position position="189"/>
    </location>
</feature>
<feature type="sequence conflict" description="In Ref. 1; BAB20276/BAB20277/BAB20278 and 2; BAB40328." evidence="6" ref="1 2">
    <original>G</original>
    <variation>D</variation>
    <location>
        <position position="325"/>
    </location>
</feature>
<feature type="sequence conflict" description="In Ref. 1; BAB20276/BAB20277 and 2; BAB40328." evidence="6" ref="1 2">
    <original>H</original>
    <variation>Y</variation>
    <location>
        <position position="335"/>
    </location>
</feature>
<feature type="sequence conflict" description="In Ref. 1; BAB20276/BAB20277/BAB20278 and 2; BAB40328." evidence="6" ref="1 2">
    <original>Y</original>
    <variation>H</variation>
    <location>
        <position position="372"/>
    </location>
</feature>
<evidence type="ECO:0000250" key="1"/>
<evidence type="ECO:0000255" key="2"/>
<evidence type="ECO:0000255" key="3">
    <source>
        <dbReference type="PROSITE-ProRule" id="PRU00196"/>
    </source>
</evidence>
<evidence type="ECO:0000255" key="4">
    <source>
        <dbReference type="PROSITE-ProRule" id="PRU00274"/>
    </source>
</evidence>
<evidence type="ECO:0000303" key="5">
    <source ref="1"/>
</evidence>
<evidence type="ECO:0000305" key="6"/>